<accession>Q9PPL8</accession>
<accession>Q0PAJ0</accession>
<protein>
    <recommendedName>
        <fullName evidence="1">Acetate kinase</fullName>
        <ecNumber evidence="1">2.7.2.1</ecNumber>
    </recommendedName>
    <alternativeName>
        <fullName evidence="1">Acetokinase</fullName>
    </alternativeName>
</protein>
<sequence>MKILVLNSGSSSIKFKFFDNKVVKASGLVEKIGEQNSKVVLKNTLNNESFERELTINNHEEGLSIVNELFKESGILADLNALDGCGHRIVHGGRNLSEHCLVDDYVLKEIDRVSIFAPLHNPAHLAGIKTMIKAAPSVANAAIFDTAFHRTMPDFAYMYALPYDFYDKHNIRRYGFHGTSHAYVSSRAAKFLQKDQNELNVISAHLGNGASVCAIEKGKSVDTSMGFTPLEGLVMGTRCGDLDPAILPFISHLKGLTIEEIDTLMNKKSGVYGICGYNDFRDIEREIEQGNDKARLALDMFCYRLVKYIGSYFAVLPKTDAIIFTGGIGENDSLVRQKVCERLAHLGIELDFELNKQRISGERMINHANSKVKVLVIPTDEELEIARITEELIGKN</sequence>
<keyword id="KW-0067">ATP-binding</keyword>
<keyword id="KW-0963">Cytoplasm</keyword>
<keyword id="KW-0418">Kinase</keyword>
<keyword id="KW-0460">Magnesium</keyword>
<keyword id="KW-0479">Metal-binding</keyword>
<keyword id="KW-0547">Nucleotide-binding</keyword>
<keyword id="KW-1185">Reference proteome</keyword>
<keyword id="KW-0808">Transferase</keyword>
<evidence type="ECO:0000255" key="1">
    <source>
        <dbReference type="HAMAP-Rule" id="MF_00020"/>
    </source>
</evidence>
<reference key="1">
    <citation type="journal article" date="2000" name="Nature">
        <title>The genome sequence of the food-borne pathogen Campylobacter jejuni reveals hypervariable sequences.</title>
        <authorList>
            <person name="Parkhill J."/>
            <person name="Wren B.W."/>
            <person name="Mungall K.L."/>
            <person name="Ketley J.M."/>
            <person name="Churcher C.M."/>
            <person name="Basham D."/>
            <person name="Chillingworth T."/>
            <person name="Davies R.M."/>
            <person name="Feltwell T."/>
            <person name="Holroyd S."/>
            <person name="Jagels K."/>
            <person name="Karlyshev A.V."/>
            <person name="Moule S."/>
            <person name="Pallen M.J."/>
            <person name="Penn C.W."/>
            <person name="Quail M.A."/>
            <person name="Rajandream M.A."/>
            <person name="Rutherford K.M."/>
            <person name="van Vliet A.H.M."/>
            <person name="Whitehead S."/>
            <person name="Barrell B.G."/>
        </authorList>
    </citation>
    <scope>NUCLEOTIDE SEQUENCE [LARGE SCALE GENOMIC DNA]</scope>
    <source>
        <strain>ATCC 700819 / NCTC 11168</strain>
    </source>
</reference>
<organism>
    <name type="scientific">Campylobacter jejuni subsp. jejuni serotype O:2 (strain ATCC 700819 / NCTC 11168)</name>
    <dbReference type="NCBI Taxonomy" id="192222"/>
    <lineage>
        <taxon>Bacteria</taxon>
        <taxon>Pseudomonadati</taxon>
        <taxon>Campylobacterota</taxon>
        <taxon>Epsilonproteobacteria</taxon>
        <taxon>Campylobacterales</taxon>
        <taxon>Campylobacteraceae</taxon>
        <taxon>Campylobacter</taxon>
    </lineage>
</organism>
<dbReference type="EC" id="2.7.2.1" evidence="1"/>
<dbReference type="EMBL" id="AL111168">
    <property type="protein sequence ID" value="CAL34826.1"/>
    <property type="molecule type" value="Genomic_DNA"/>
</dbReference>
<dbReference type="PIR" id="D81339">
    <property type="entry name" value="D81339"/>
</dbReference>
<dbReference type="RefSeq" id="WP_010891878.1">
    <property type="nucleotide sequence ID" value="NZ_SZUC01000002.1"/>
</dbReference>
<dbReference type="RefSeq" id="YP_002344107.1">
    <property type="nucleotide sequence ID" value="NC_002163.1"/>
</dbReference>
<dbReference type="SMR" id="Q9PPL8"/>
<dbReference type="IntAct" id="Q9PPL8">
    <property type="interactions" value="4"/>
</dbReference>
<dbReference type="STRING" id="192222.Cj0689"/>
<dbReference type="PaxDb" id="192222-Cj0689"/>
<dbReference type="EnsemblBacteria" id="CAL34826">
    <property type="protein sequence ID" value="CAL34826"/>
    <property type="gene ID" value="Cj0689"/>
</dbReference>
<dbReference type="GeneID" id="905008"/>
<dbReference type="KEGG" id="cje:Cj0689"/>
<dbReference type="PATRIC" id="fig|192222.6.peg.681"/>
<dbReference type="eggNOG" id="COG0282">
    <property type="taxonomic scope" value="Bacteria"/>
</dbReference>
<dbReference type="HOGENOM" id="CLU_020352_0_1_7"/>
<dbReference type="OrthoDB" id="9802453at2"/>
<dbReference type="UniPathway" id="UPA00340">
    <property type="reaction ID" value="UER00458"/>
</dbReference>
<dbReference type="Proteomes" id="UP000000799">
    <property type="component" value="Chromosome"/>
</dbReference>
<dbReference type="GO" id="GO:0005737">
    <property type="term" value="C:cytoplasm"/>
    <property type="evidence" value="ECO:0007669"/>
    <property type="project" value="UniProtKB-SubCell"/>
</dbReference>
<dbReference type="GO" id="GO:0008776">
    <property type="term" value="F:acetate kinase activity"/>
    <property type="evidence" value="ECO:0007669"/>
    <property type="project" value="UniProtKB-UniRule"/>
</dbReference>
<dbReference type="GO" id="GO:0005524">
    <property type="term" value="F:ATP binding"/>
    <property type="evidence" value="ECO:0007669"/>
    <property type="project" value="UniProtKB-KW"/>
</dbReference>
<dbReference type="GO" id="GO:0000287">
    <property type="term" value="F:magnesium ion binding"/>
    <property type="evidence" value="ECO:0007669"/>
    <property type="project" value="UniProtKB-UniRule"/>
</dbReference>
<dbReference type="GO" id="GO:0006083">
    <property type="term" value="P:acetate metabolic process"/>
    <property type="evidence" value="ECO:0007669"/>
    <property type="project" value="TreeGrafter"/>
</dbReference>
<dbReference type="GO" id="GO:0006085">
    <property type="term" value="P:acetyl-CoA biosynthetic process"/>
    <property type="evidence" value="ECO:0007669"/>
    <property type="project" value="UniProtKB-UniRule"/>
</dbReference>
<dbReference type="CDD" id="cd24010">
    <property type="entry name" value="ASKHA_NBD_AcK_PK"/>
    <property type="match status" value="1"/>
</dbReference>
<dbReference type="Gene3D" id="3.30.420.40">
    <property type="match status" value="2"/>
</dbReference>
<dbReference type="HAMAP" id="MF_00020">
    <property type="entry name" value="Acetate_kinase"/>
    <property type="match status" value="1"/>
</dbReference>
<dbReference type="InterPro" id="IPR004372">
    <property type="entry name" value="Ac/propionate_kinase"/>
</dbReference>
<dbReference type="InterPro" id="IPR000890">
    <property type="entry name" value="Aliphatic_acid_kin_short-chain"/>
</dbReference>
<dbReference type="InterPro" id="IPR023865">
    <property type="entry name" value="Aliphatic_acid_kinase_CS"/>
</dbReference>
<dbReference type="InterPro" id="IPR043129">
    <property type="entry name" value="ATPase_NBD"/>
</dbReference>
<dbReference type="NCBIfam" id="TIGR00016">
    <property type="entry name" value="ackA"/>
    <property type="match status" value="1"/>
</dbReference>
<dbReference type="PANTHER" id="PTHR21060">
    <property type="entry name" value="ACETATE KINASE"/>
    <property type="match status" value="1"/>
</dbReference>
<dbReference type="PANTHER" id="PTHR21060:SF15">
    <property type="entry name" value="ACETATE KINASE-RELATED"/>
    <property type="match status" value="1"/>
</dbReference>
<dbReference type="Pfam" id="PF00871">
    <property type="entry name" value="Acetate_kinase"/>
    <property type="match status" value="1"/>
</dbReference>
<dbReference type="PIRSF" id="PIRSF000722">
    <property type="entry name" value="Acetate_prop_kin"/>
    <property type="match status" value="1"/>
</dbReference>
<dbReference type="PRINTS" id="PR00471">
    <property type="entry name" value="ACETATEKNASE"/>
</dbReference>
<dbReference type="SUPFAM" id="SSF53067">
    <property type="entry name" value="Actin-like ATPase domain"/>
    <property type="match status" value="2"/>
</dbReference>
<dbReference type="PROSITE" id="PS01075">
    <property type="entry name" value="ACETATE_KINASE_1"/>
    <property type="match status" value="1"/>
</dbReference>
<dbReference type="PROSITE" id="PS01076">
    <property type="entry name" value="ACETATE_KINASE_2"/>
    <property type="match status" value="1"/>
</dbReference>
<proteinExistence type="inferred from homology"/>
<gene>
    <name evidence="1" type="primary">ackA</name>
    <name type="ordered locus">Cj0689</name>
</gene>
<name>ACKA_CAMJE</name>
<feature type="chain" id="PRO_0000107541" description="Acetate kinase">
    <location>
        <begin position="1"/>
        <end position="396"/>
    </location>
</feature>
<feature type="active site" description="Proton donor/acceptor" evidence="1">
    <location>
        <position position="145"/>
    </location>
</feature>
<feature type="binding site" evidence="1">
    <location>
        <position position="7"/>
    </location>
    <ligand>
        <name>Mg(2+)</name>
        <dbReference type="ChEBI" id="CHEBI:18420"/>
    </ligand>
</feature>
<feature type="binding site" evidence="1">
    <location>
        <position position="14"/>
    </location>
    <ligand>
        <name>ATP</name>
        <dbReference type="ChEBI" id="CHEBI:30616"/>
    </ligand>
</feature>
<feature type="binding site" evidence="1">
    <location>
        <position position="88"/>
    </location>
    <ligand>
        <name>substrate</name>
    </ligand>
</feature>
<feature type="binding site" evidence="1">
    <location>
        <begin position="205"/>
        <end position="209"/>
    </location>
    <ligand>
        <name>ATP</name>
        <dbReference type="ChEBI" id="CHEBI:30616"/>
    </ligand>
</feature>
<feature type="binding site" evidence="1">
    <location>
        <begin position="279"/>
        <end position="281"/>
    </location>
    <ligand>
        <name>ATP</name>
        <dbReference type="ChEBI" id="CHEBI:30616"/>
    </ligand>
</feature>
<feature type="binding site" evidence="1">
    <location>
        <begin position="327"/>
        <end position="331"/>
    </location>
    <ligand>
        <name>ATP</name>
        <dbReference type="ChEBI" id="CHEBI:30616"/>
    </ligand>
</feature>
<feature type="binding site" evidence="1">
    <location>
        <position position="381"/>
    </location>
    <ligand>
        <name>Mg(2+)</name>
        <dbReference type="ChEBI" id="CHEBI:18420"/>
    </ligand>
</feature>
<feature type="site" description="Transition state stabilizer" evidence="1">
    <location>
        <position position="177"/>
    </location>
</feature>
<feature type="site" description="Transition state stabilizer" evidence="1">
    <location>
        <position position="238"/>
    </location>
</feature>
<comment type="function">
    <text evidence="1">Catalyzes the formation of acetyl phosphate from acetate and ATP. Can also catalyze the reverse reaction.</text>
</comment>
<comment type="catalytic activity">
    <reaction evidence="1">
        <text>acetate + ATP = acetyl phosphate + ADP</text>
        <dbReference type="Rhea" id="RHEA:11352"/>
        <dbReference type="ChEBI" id="CHEBI:22191"/>
        <dbReference type="ChEBI" id="CHEBI:30089"/>
        <dbReference type="ChEBI" id="CHEBI:30616"/>
        <dbReference type="ChEBI" id="CHEBI:456216"/>
        <dbReference type="EC" id="2.7.2.1"/>
    </reaction>
</comment>
<comment type="cofactor">
    <cofactor evidence="1">
        <name>Mg(2+)</name>
        <dbReference type="ChEBI" id="CHEBI:18420"/>
    </cofactor>
    <cofactor evidence="1">
        <name>Mn(2+)</name>
        <dbReference type="ChEBI" id="CHEBI:29035"/>
    </cofactor>
    <text evidence="1">Mg(2+). Can also accept Mn(2+).</text>
</comment>
<comment type="pathway">
    <text evidence="1">Metabolic intermediate biosynthesis; acetyl-CoA biosynthesis; acetyl-CoA from acetate: step 1/2.</text>
</comment>
<comment type="subunit">
    <text evidence="1">Homodimer.</text>
</comment>
<comment type="subcellular location">
    <subcellularLocation>
        <location evidence="1">Cytoplasm</location>
    </subcellularLocation>
</comment>
<comment type="similarity">
    <text evidence="1">Belongs to the acetokinase family.</text>
</comment>